<reference key="1">
    <citation type="journal article" date="1998" name="J. Bacteriol.">
        <title>Phosphate assimilation in Rhizobium (Sinorhizobium) meliloti: identification of a pit-like gene.</title>
        <authorList>
            <person name="Bardin S.D."/>
            <person name="Voegele R.T."/>
            <person name="Finan T.M."/>
        </authorList>
    </citation>
    <scope>NUCLEOTIDE SEQUENCE [GENOMIC DNA]</scope>
    <source>
        <strain>SU47 / 1021</strain>
    </source>
</reference>
<reference key="2">
    <citation type="journal article" date="2001" name="Proc. Natl. Acad. Sci. U.S.A.">
        <title>Analysis of the chromosome sequence of the legume symbiont Sinorhizobium meliloti strain 1021.</title>
        <authorList>
            <person name="Capela D."/>
            <person name="Barloy-Hubler F."/>
            <person name="Gouzy J."/>
            <person name="Bothe G."/>
            <person name="Ampe F."/>
            <person name="Batut J."/>
            <person name="Boistard P."/>
            <person name="Becker A."/>
            <person name="Boutry M."/>
            <person name="Cadieu E."/>
            <person name="Dreano S."/>
            <person name="Gloux S."/>
            <person name="Godrie T."/>
            <person name="Goffeau A."/>
            <person name="Kahn D."/>
            <person name="Kiss E."/>
            <person name="Lelaure V."/>
            <person name="Masuy D."/>
            <person name="Pohl T."/>
            <person name="Portetelle D."/>
            <person name="Puehler A."/>
            <person name="Purnelle B."/>
            <person name="Ramsperger U."/>
            <person name="Renard C."/>
            <person name="Thebault P."/>
            <person name="Vandenbol M."/>
            <person name="Weidner S."/>
            <person name="Galibert F."/>
        </authorList>
    </citation>
    <scope>NUCLEOTIDE SEQUENCE [LARGE SCALE GENOMIC DNA]</scope>
    <source>
        <strain>1021</strain>
    </source>
</reference>
<reference key="3">
    <citation type="journal article" date="2001" name="Science">
        <title>The composite genome of the legume symbiont Sinorhizobium meliloti.</title>
        <authorList>
            <person name="Galibert F."/>
            <person name="Finan T.M."/>
            <person name="Long S.R."/>
            <person name="Puehler A."/>
            <person name="Abola P."/>
            <person name="Ampe F."/>
            <person name="Barloy-Hubler F."/>
            <person name="Barnett M.J."/>
            <person name="Becker A."/>
            <person name="Boistard P."/>
            <person name="Bothe G."/>
            <person name="Boutry M."/>
            <person name="Bowser L."/>
            <person name="Buhrmester J."/>
            <person name="Cadieu E."/>
            <person name="Capela D."/>
            <person name="Chain P."/>
            <person name="Cowie A."/>
            <person name="Davis R.W."/>
            <person name="Dreano S."/>
            <person name="Federspiel N.A."/>
            <person name="Fisher R.F."/>
            <person name="Gloux S."/>
            <person name="Godrie T."/>
            <person name="Goffeau A."/>
            <person name="Golding B."/>
            <person name="Gouzy J."/>
            <person name="Gurjal M."/>
            <person name="Hernandez-Lucas I."/>
            <person name="Hong A."/>
            <person name="Huizar L."/>
            <person name="Hyman R.W."/>
            <person name="Jones T."/>
            <person name="Kahn D."/>
            <person name="Kahn M.L."/>
            <person name="Kalman S."/>
            <person name="Keating D.H."/>
            <person name="Kiss E."/>
            <person name="Komp C."/>
            <person name="Lelaure V."/>
            <person name="Masuy D."/>
            <person name="Palm C."/>
            <person name="Peck M.C."/>
            <person name="Pohl T.M."/>
            <person name="Portetelle D."/>
            <person name="Purnelle B."/>
            <person name="Ramsperger U."/>
            <person name="Surzycki R."/>
            <person name="Thebault P."/>
            <person name="Vandenbol M."/>
            <person name="Vorhoelter F.J."/>
            <person name="Weidner S."/>
            <person name="Wells D.H."/>
            <person name="Wong K."/>
            <person name="Yeh K.-C."/>
            <person name="Batut J."/>
        </authorList>
    </citation>
    <scope>NUCLEOTIDE SEQUENCE [LARGE SCALE GENOMIC DNA]</scope>
    <source>
        <strain>1021</strain>
    </source>
</reference>
<evidence type="ECO:0000250" key="1">
    <source>
        <dbReference type="UniProtKB" id="P0AFJ7"/>
    </source>
</evidence>
<evidence type="ECO:0000255" key="2"/>
<evidence type="ECO:0000305" key="3"/>
<dbReference type="EMBL" id="AF008187">
    <property type="protein sequence ID" value="AAB70171.1"/>
    <property type="molecule type" value="Genomic_DNA"/>
</dbReference>
<dbReference type="EMBL" id="AL591688">
    <property type="protein sequence ID" value="CAC41573.1"/>
    <property type="molecule type" value="Genomic_DNA"/>
</dbReference>
<dbReference type="RefSeq" id="NP_384292.1">
    <property type="nucleotide sequence ID" value="NC_003047.1"/>
</dbReference>
<dbReference type="RefSeq" id="WP_003531901.1">
    <property type="nucleotide sequence ID" value="NC_003047.1"/>
</dbReference>
<dbReference type="SMR" id="O30499"/>
<dbReference type="TCDB" id="2.A.20.1.4">
    <property type="family name" value="the inorganic phosphate transporter (pit) family"/>
</dbReference>
<dbReference type="EnsemblBacteria" id="CAC41573">
    <property type="protein sequence ID" value="CAC41573"/>
    <property type="gene ID" value="SMc02861"/>
</dbReference>
<dbReference type="KEGG" id="sme:SMc02861"/>
<dbReference type="PATRIC" id="fig|266834.11.peg.1548"/>
<dbReference type="eggNOG" id="COG0306">
    <property type="taxonomic scope" value="Bacteria"/>
</dbReference>
<dbReference type="HOGENOM" id="CLU_015355_1_1_5"/>
<dbReference type="OrthoDB" id="9779554at2"/>
<dbReference type="Proteomes" id="UP000001976">
    <property type="component" value="Chromosome"/>
</dbReference>
<dbReference type="GO" id="GO:0005886">
    <property type="term" value="C:plasma membrane"/>
    <property type="evidence" value="ECO:0007669"/>
    <property type="project" value="UniProtKB-SubCell"/>
</dbReference>
<dbReference type="GO" id="GO:0005315">
    <property type="term" value="F:phosphate transmembrane transporter activity"/>
    <property type="evidence" value="ECO:0007669"/>
    <property type="project" value="InterPro"/>
</dbReference>
<dbReference type="GO" id="GO:0015293">
    <property type="term" value="F:symporter activity"/>
    <property type="evidence" value="ECO:0007669"/>
    <property type="project" value="UniProtKB-KW"/>
</dbReference>
<dbReference type="GO" id="GO:0035435">
    <property type="term" value="P:phosphate ion transmembrane transport"/>
    <property type="evidence" value="ECO:0007669"/>
    <property type="project" value="TreeGrafter"/>
</dbReference>
<dbReference type="InterPro" id="IPR001204">
    <property type="entry name" value="Phos_transporter"/>
</dbReference>
<dbReference type="PANTHER" id="PTHR11101">
    <property type="entry name" value="PHOSPHATE TRANSPORTER"/>
    <property type="match status" value="1"/>
</dbReference>
<dbReference type="PANTHER" id="PTHR11101:SF80">
    <property type="entry name" value="PHOSPHATE TRANSPORTER"/>
    <property type="match status" value="1"/>
</dbReference>
<dbReference type="Pfam" id="PF01384">
    <property type="entry name" value="PHO4"/>
    <property type="match status" value="1"/>
</dbReference>
<accession>O30499</accession>
<feature type="chain" id="PRO_0000080793" description="Probable low-affinity inorganic phosphate transporter">
    <location>
        <begin position="1"/>
        <end position="334"/>
    </location>
</feature>
<feature type="transmembrane region" description="Helical" evidence="2">
    <location>
        <begin position="3"/>
        <end position="23"/>
    </location>
</feature>
<feature type="transmembrane region" description="Helical" evidence="2">
    <location>
        <begin position="47"/>
        <end position="67"/>
    </location>
</feature>
<feature type="transmembrane region" description="Helical" evidence="2">
    <location>
        <begin position="84"/>
        <end position="104"/>
    </location>
</feature>
<feature type="transmembrane region" description="Helical" evidence="2">
    <location>
        <begin position="111"/>
        <end position="131"/>
    </location>
</feature>
<feature type="transmembrane region" description="Helical" evidence="2">
    <location>
        <begin position="139"/>
        <end position="159"/>
    </location>
</feature>
<feature type="transmembrane region" description="Helical" evidence="2">
    <location>
        <begin position="216"/>
        <end position="236"/>
    </location>
</feature>
<feature type="transmembrane region" description="Helical" evidence="2">
    <location>
        <begin position="258"/>
        <end position="278"/>
    </location>
</feature>
<feature type="transmembrane region" description="Helical" evidence="2">
    <location>
        <begin position="308"/>
        <end position="328"/>
    </location>
</feature>
<gene>
    <name type="primary">pit</name>
    <name type="ordered locus">R00186</name>
    <name type="ORF">SMc02861</name>
</gene>
<proteinExistence type="inferred from homology"/>
<name>PIT_RHIME</name>
<keyword id="KW-1003">Cell membrane</keyword>
<keyword id="KW-0472">Membrane</keyword>
<keyword id="KW-0592">Phosphate transport</keyword>
<keyword id="KW-1185">Reference proteome</keyword>
<keyword id="KW-0769">Symport</keyword>
<keyword id="KW-0812">Transmembrane</keyword>
<keyword id="KW-1133">Transmembrane helix</keyword>
<keyword id="KW-0813">Transport</keyword>
<protein>
    <recommendedName>
        <fullName>Probable low-affinity inorganic phosphate transporter</fullName>
    </recommendedName>
</protein>
<sequence length="334" mass="35165">MDATLAFPLLVGLIAVALFFDFLNGLHDAANSIATIVSTRVLRPQYAVFWAAFFNFIAFLFFGLHVAETLGTGIIDPGIVTPQVIFAALMGAITWNIVTWVFGIPSSSSHALIGGLVGAGLAKTGFSSIVWQGLLKTAGAIVMSPGIGFVLALLLVLIVSWLFVRQTPFAVDSTFRVLQFVSASLYSLGHGGNDAQKTMGIIAVLLFSQGYLGSEFYVPFWVVITCQAAIALGTLFGGWRIVHTMGSKITKLNPMQGFCAETGGAITLFAATWLGIPVSTTHTITGAIIGVGAARRVSAVRWGLAGNIVVAWVITMPAAALISALCYFAADLVA</sequence>
<comment type="function">
    <text evidence="1">Low-affinity inorganic phosphate transporter.</text>
</comment>
<comment type="catalytic activity">
    <reaction evidence="1">
        <text>phosphate(in) + H(+)(in) = phosphate(out) + H(+)(out)</text>
        <dbReference type="Rhea" id="RHEA:29939"/>
        <dbReference type="ChEBI" id="CHEBI:15378"/>
        <dbReference type="ChEBI" id="CHEBI:43474"/>
    </reaction>
</comment>
<comment type="subcellular location">
    <subcellularLocation>
        <location evidence="3">Cell membrane</location>
        <topology evidence="2">Multi-pass membrane protein</topology>
    </subcellularLocation>
</comment>
<comment type="similarity">
    <text evidence="3">Belongs to the inorganic phosphate transporter (PiT) (TC 2.A.20) family. Pit subfamily.</text>
</comment>
<organism>
    <name type="scientific">Rhizobium meliloti (strain 1021)</name>
    <name type="common">Ensifer meliloti</name>
    <name type="synonym">Sinorhizobium meliloti</name>
    <dbReference type="NCBI Taxonomy" id="266834"/>
    <lineage>
        <taxon>Bacteria</taxon>
        <taxon>Pseudomonadati</taxon>
        <taxon>Pseudomonadota</taxon>
        <taxon>Alphaproteobacteria</taxon>
        <taxon>Hyphomicrobiales</taxon>
        <taxon>Rhizobiaceae</taxon>
        <taxon>Sinorhizobium/Ensifer group</taxon>
        <taxon>Sinorhizobium</taxon>
    </lineage>
</organism>